<name>SCGT_TOBAC</name>
<accession>Q9AT54</accession>
<feature type="chain" id="PRO_0000418418" description="Scopoletin glucosyltransferase">
    <location>
        <begin position="1"/>
        <end position="476"/>
    </location>
</feature>
<feature type="active site" description="Proton acceptor" evidence="1">
    <location>
        <position position="16"/>
    </location>
</feature>
<feature type="active site" description="Charge relay" evidence="1">
    <location>
        <position position="119"/>
    </location>
</feature>
<feature type="binding site" evidence="2">
    <location>
        <position position="16"/>
    </location>
    <ligand>
        <name>an anthocyanidin</name>
        <dbReference type="ChEBI" id="CHEBI:143576"/>
    </ligand>
</feature>
<feature type="binding site" evidence="1">
    <location>
        <position position="343"/>
    </location>
    <ligand>
        <name>UDP-alpha-D-glucose</name>
        <dbReference type="ChEBI" id="CHEBI:58885"/>
    </ligand>
</feature>
<feature type="binding site" evidence="1">
    <location>
        <position position="345"/>
    </location>
    <ligand>
        <name>UDP-alpha-D-glucose</name>
        <dbReference type="ChEBI" id="CHEBI:58885"/>
    </ligand>
</feature>
<feature type="binding site" evidence="1">
    <location>
        <position position="360"/>
    </location>
    <ligand>
        <name>UDP-alpha-D-glucose</name>
        <dbReference type="ChEBI" id="CHEBI:58885"/>
    </ligand>
</feature>
<feature type="binding site" evidence="1">
    <location>
        <position position="363"/>
    </location>
    <ligand>
        <name>UDP-alpha-D-glucose</name>
        <dbReference type="ChEBI" id="CHEBI:58885"/>
    </ligand>
</feature>
<feature type="binding site" evidence="1">
    <location>
        <position position="364"/>
    </location>
    <ligand>
        <name>UDP-alpha-D-glucose</name>
        <dbReference type="ChEBI" id="CHEBI:58885"/>
    </ligand>
</feature>
<feature type="binding site" evidence="1">
    <location>
        <position position="365"/>
    </location>
    <ligand>
        <name>UDP-alpha-D-glucose</name>
        <dbReference type="ChEBI" id="CHEBI:58885"/>
    </ligand>
</feature>
<feature type="binding site" evidence="1">
    <location>
        <position position="368"/>
    </location>
    <ligand>
        <name>UDP-alpha-D-glucose</name>
        <dbReference type="ChEBI" id="CHEBI:58885"/>
    </ligand>
</feature>
<feature type="binding site" evidence="2">
    <location>
        <position position="383"/>
    </location>
    <ligand>
        <name>an anthocyanidin</name>
        <dbReference type="ChEBI" id="CHEBI:143576"/>
    </ligand>
</feature>
<feature type="binding site" evidence="1">
    <location>
        <position position="384"/>
    </location>
    <ligand>
        <name>UDP-alpha-D-glucose</name>
        <dbReference type="ChEBI" id="CHEBI:58885"/>
    </ligand>
</feature>
<feature type="binding site" evidence="1">
    <location>
        <position position="385"/>
    </location>
    <ligand>
        <name>UDP-alpha-D-glucose</name>
        <dbReference type="ChEBI" id="CHEBI:58885"/>
    </ligand>
</feature>
<protein>
    <recommendedName>
        <fullName>Scopoletin glucosyltransferase</fullName>
        <ecNumber>2.4.1.128</ecNumber>
    </recommendedName>
    <alternativeName>
        <fullName>Phenylpropanoid:glucosyltransferase 1</fullName>
    </alternativeName>
</protein>
<reference key="1">
    <citation type="journal article" date="1998" name="FEBS Lett.">
        <title>Two tobacco genes induced by infection, elicitor and salicylic acid encode glucosyltransferases acting on phenylpropanoids and benzoic acid derivatives, including salicylic acid.</title>
        <authorList>
            <person name="Fraissinet-Tachet L."/>
            <person name="Baltz R."/>
            <person name="Chong J."/>
            <person name="Kauffmann S."/>
            <person name="Fritig B."/>
            <person name="Saindrenan P."/>
        </authorList>
    </citation>
    <scope>NUCLEOTIDE SEQUENCE [MRNA]</scope>
    <scope>CATALYTIC ACTIVITY</scope>
    <scope>INDUCTION</scope>
    <scope>SUBSTRATE SPECIFICITY</scope>
    <source>
        <strain>cv. Samsun NN</strain>
    </source>
</reference>
<reference key="2">
    <citation type="journal article" date="2002" name="Plant Cell">
        <title>Downregulation of a pathogen-responsive tobacco UDP-Glc:phenylpropanoid glucosyltransferase reduces scopoletin glucoside accumulation, enhances oxidative stress, and weakens virus resistance.</title>
        <authorList>
            <person name="Chong J."/>
            <person name="Baltz R."/>
            <person name="Schmitt C."/>
            <person name="Beffa R."/>
            <person name="Fritig B."/>
            <person name="Saindrenan P."/>
        </authorList>
    </citation>
    <scope>NUCLEOTIDE SEQUENCE [MRNA]</scope>
    <scope>FUNCTION</scope>
</reference>
<reference key="3">
    <citation type="journal article" date="2004" name="Plant Mol. Biol.">
        <title>Over-expression of a scopoletin glucosyltransferase in Nicotiana tabacum leads to precocious lesion formation during the hypersensitive response to tobacco mosaic virus but does not affect virus resistance.</title>
        <authorList>
            <person name="Gachon C."/>
            <person name="Baltz R."/>
            <person name="Saindrenan P."/>
        </authorList>
    </citation>
    <scope>FUNCTION</scope>
</reference>
<dbReference type="EC" id="2.4.1.128"/>
<dbReference type="EMBL" id="AF346431">
    <property type="protein sequence ID" value="AAK28303.1"/>
    <property type="molecule type" value="mRNA"/>
</dbReference>
<dbReference type="SMR" id="Q9AT54"/>
<dbReference type="STRING" id="4097.Q9AT54"/>
<dbReference type="CAZy" id="GT1">
    <property type="family name" value="Glycosyltransferase Family 1"/>
</dbReference>
<dbReference type="PaxDb" id="4097-Q9AT54"/>
<dbReference type="BioCyc" id="MetaCyc:MONOMER-17896"/>
<dbReference type="Proteomes" id="UP000084051">
    <property type="component" value="Unplaced"/>
</dbReference>
<dbReference type="GO" id="GO:0042802">
    <property type="term" value="F:identical protein binding"/>
    <property type="evidence" value="ECO:0000314"/>
    <property type="project" value="UniProtKB"/>
</dbReference>
<dbReference type="GO" id="GO:0050275">
    <property type="term" value="F:scopoletin glucosyltransferase activity"/>
    <property type="evidence" value="ECO:0000314"/>
    <property type="project" value="UniProtKB"/>
</dbReference>
<dbReference type="GO" id="GO:0035251">
    <property type="term" value="F:UDP-glucosyltransferase activity"/>
    <property type="evidence" value="ECO:0000318"/>
    <property type="project" value="GO_Central"/>
</dbReference>
<dbReference type="CDD" id="cd03784">
    <property type="entry name" value="GT1_Gtf-like"/>
    <property type="match status" value="1"/>
</dbReference>
<dbReference type="FunFam" id="3.40.50.2000:FF:000047">
    <property type="entry name" value="Glycosyltransferase"/>
    <property type="match status" value="1"/>
</dbReference>
<dbReference type="FunFam" id="3.40.50.2000:FF:000071">
    <property type="entry name" value="Glycosyltransferase"/>
    <property type="match status" value="1"/>
</dbReference>
<dbReference type="Gene3D" id="3.40.50.2000">
    <property type="entry name" value="Glycogen Phosphorylase B"/>
    <property type="match status" value="2"/>
</dbReference>
<dbReference type="InterPro" id="IPR002213">
    <property type="entry name" value="UDP_glucos_trans"/>
</dbReference>
<dbReference type="InterPro" id="IPR035595">
    <property type="entry name" value="UDP_glycos_trans_CS"/>
</dbReference>
<dbReference type="PANTHER" id="PTHR48047">
    <property type="entry name" value="GLYCOSYLTRANSFERASE"/>
    <property type="match status" value="1"/>
</dbReference>
<dbReference type="PANTHER" id="PTHR48047:SF219">
    <property type="entry name" value="SCOPOLETIN GLUCOSYLTRANSFERASE-LIKE"/>
    <property type="match status" value="1"/>
</dbReference>
<dbReference type="Pfam" id="PF00201">
    <property type="entry name" value="UDPGT"/>
    <property type="match status" value="1"/>
</dbReference>
<dbReference type="SUPFAM" id="SSF53756">
    <property type="entry name" value="UDP-Glycosyltransferase/glycogen phosphorylase"/>
    <property type="match status" value="1"/>
</dbReference>
<dbReference type="PROSITE" id="PS00375">
    <property type="entry name" value="UDPGT"/>
    <property type="match status" value="1"/>
</dbReference>
<organism>
    <name type="scientific">Nicotiana tabacum</name>
    <name type="common">Common tobacco</name>
    <dbReference type="NCBI Taxonomy" id="4097"/>
    <lineage>
        <taxon>Eukaryota</taxon>
        <taxon>Viridiplantae</taxon>
        <taxon>Streptophyta</taxon>
        <taxon>Embryophyta</taxon>
        <taxon>Tracheophyta</taxon>
        <taxon>Spermatophyta</taxon>
        <taxon>Magnoliopsida</taxon>
        <taxon>eudicotyledons</taxon>
        <taxon>Gunneridae</taxon>
        <taxon>Pentapetalae</taxon>
        <taxon>asterids</taxon>
        <taxon>lamiids</taxon>
        <taxon>Solanales</taxon>
        <taxon>Solanaceae</taxon>
        <taxon>Nicotianoideae</taxon>
        <taxon>Nicotianeae</taxon>
        <taxon>Nicotiana</taxon>
    </lineage>
</organism>
<sequence>MGQLHFFFFPVMAHGHMIPTLDMAKLFASRGVKATIITTPLNEFVFSKAIQRNKHLGIEIEIRLIKFPAVENGLPEECERLDQIPSDEKLPNFFKAVAMMQEPLEQLIEECRPDCLISDMFLPWTTDTAAKFNIPRIVFHGTSFFALCVENSVRLNKPFKNVSSDSETFVVPDLPHEIKLTRTQVSPFERSGEETAMTRMIKTVRESDSKSYGVVFNSFYELETDYVEHYTKVLGRRAWAIGPLSMCNRDIEDKAERGKKSSIDKHECLKWLDSKKPSSVVYVCFGSVANFTASQLHELAMGIEASGQEFIWVVRTELDNEDWLPEGFEERTKEKGLIIRGWAPQVLILDHESVGAFVTHCGWNSTLEGVSGGVPMVTWPVFAEQFFNEKLVTEVLKTGAGVGSIQWKRSASEGVKREAIAKAIKRVMVSEEADGFRNRAKAYKEMARKAIEEGGSSYTGLTTLLEDISTYSSTGH</sequence>
<comment type="function">
    <text evidence="3 4">Glucosyltransferase acting preferentially on aromatic substrates of the phenylpropanoid types. The best substrates are scopoletin and esculetin. Required for full resistance to virus.</text>
</comment>
<comment type="catalytic activity">
    <reaction evidence="5">
        <text>scopoletin + UDP-alpha-D-glucose = scopolin + UDP + H(+)</text>
        <dbReference type="Rhea" id="RHEA:20453"/>
        <dbReference type="ChEBI" id="CHEBI:15378"/>
        <dbReference type="ChEBI" id="CHEBI:16065"/>
        <dbReference type="ChEBI" id="CHEBI:17488"/>
        <dbReference type="ChEBI" id="CHEBI:58223"/>
        <dbReference type="ChEBI" id="CHEBI:58885"/>
        <dbReference type="EC" id="2.4.1.128"/>
    </reaction>
</comment>
<comment type="induction">
    <text evidence="5">Up-regulated by elicitor, salicylic acid and virus infection.</text>
</comment>
<comment type="similarity">
    <text evidence="6">Belongs to the UDP-glycosyltransferase family.</text>
</comment>
<proteinExistence type="evidence at protein level"/>
<keyword id="KW-0328">Glycosyltransferase</keyword>
<keyword id="KW-1185">Reference proteome</keyword>
<keyword id="KW-0808">Transferase</keyword>
<gene>
    <name type="primary">TOGT1</name>
</gene>
<evidence type="ECO:0000250" key="1">
    <source>
        <dbReference type="UniProtKB" id="A0A0A1HA03"/>
    </source>
</evidence>
<evidence type="ECO:0000250" key="2">
    <source>
        <dbReference type="UniProtKB" id="P51094"/>
    </source>
</evidence>
<evidence type="ECO:0000269" key="3">
    <source>
    </source>
</evidence>
<evidence type="ECO:0000269" key="4">
    <source>
    </source>
</evidence>
<evidence type="ECO:0000269" key="5">
    <source>
    </source>
</evidence>
<evidence type="ECO:0000305" key="6"/>